<organism>
    <name type="scientific">Avian reovirus (strain S1133)</name>
    <name type="common">ARV</name>
    <dbReference type="NCBI Taxonomy" id="38171"/>
    <lineage>
        <taxon>Viruses</taxon>
        <taxon>Riboviria</taxon>
        <taxon>Orthornavirae</taxon>
        <taxon>Duplornaviricota</taxon>
        <taxon>Resentoviricetes</taxon>
        <taxon>Reovirales</taxon>
        <taxon>Spinareoviridae</taxon>
        <taxon>Orthoreovirus</taxon>
        <taxon>Avian orthoreovirus</taxon>
    </lineage>
</organism>
<reference key="1">
    <citation type="journal article" date="1995" name="J. Gen. Virol.">
        <title>Cloning, sequencing and expression of the S1 gene of avian reovirus.</title>
        <authorList>
            <person name="Shapouri M.R."/>
            <person name="Kane M."/>
            <person name="Letarte M."/>
            <person name="Bergeron J."/>
            <person name="Arella M."/>
            <person name="Silim A."/>
        </authorList>
    </citation>
    <scope>NUCLEOTIDE SEQUENCE [GENOMIC RNA]</scope>
</reference>
<reference key="2">
    <citation type="journal article" date="2001" name="Virology">
        <title>The avian reovirus genome segment S1 is a functionally tricistronic gene that expresses one structural and two nonstructural proteins in infected cells.</title>
        <authorList>
            <person name="Bodelon G."/>
            <person name="Labrada L."/>
            <person name="Martinez-Costas J."/>
            <person name="Benavente J."/>
        </authorList>
    </citation>
    <scope>NUCLEOTIDE SEQUENCE [GENOMIC RNA]</scope>
</reference>
<reference key="3">
    <citation type="journal article" date="2002" name="J. Gen. Virol.">
        <title>Subunit composition and conformational stability of the oligomeric form of the avian reovirus cell-attachment protein sigmaC.</title>
        <authorList>
            <person name="Grande A."/>
            <person name="Costas C."/>
            <person name="Benavente J."/>
        </authorList>
    </citation>
    <scope>CHARACTERIZATION</scope>
</reference>
<reference key="4">
    <citation type="journal article" date="2004" name="Virology">
        <title>Avian reovirus sigmaC protein induces apoptosis in cultured cells.</title>
        <authorList>
            <person name="Shih W.L."/>
            <person name="Hsu H.W."/>
            <person name="Liao M.H."/>
            <person name="Lee L.H."/>
            <person name="Liu H.J."/>
        </authorList>
    </citation>
    <scope>FUNCTION</scope>
</reference>
<evidence type="ECO:0000255" key="1"/>
<evidence type="ECO:0000269" key="2">
    <source>
    </source>
</evidence>
<evidence type="ECO:0000305" key="3"/>
<evidence type="ECO:0007829" key="4">
    <source>
        <dbReference type="PDB" id="2VRS"/>
    </source>
</evidence>
<accession>Q992I2</accession>
<accession>Q84141</accession>
<dbReference type="EMBL" id="L39002">
    <property type="protein sequence ID" value="AAC42113.1"/>
    <property type="molecule type" value="Genomic_RNA"/>
</dbReference>
<dbReference type="EMBL" id="AF330703">
    <property type="protein sequence ID" value="AAK18188.1"/>
    <property type="molecule type" value="Genomic_RNA"/>
</dbReference>
<dbReference type="PDB" id="2BSF">
    <property type="method" value="X-ray"/>
    <property type="resolution" value="2.10 A"/>
    <property type="chains" value="A=151-326"/>
</dbReference>
<dbReference type="PDB" id="2BT7">
    <property type="method" value="X-ray"/>
    <property type="resolution" value="2.35 A"/>
    <property type="chains" value="A=157-326"/>
</dbReference>
<dbReference type="PDB" id="2BT8">
    <property type="method" value="X-ray"/>
    <property type="resolution" value="3.00 A"/>
    <property type="chains" value="A=157-326"/>
</dbReference>
<dbReference type="PDB" id="2JJL">
    <property type="method" value="X-ray"/>
    <property type="resolution" value="2.30 A"/>
    <property type="chains" value="A=117-326"/>
</dbReference>
<dbReference type="PDB" id="2VRS">
    <property type="method" value="X-ray"/>
    <property type="resolution" value="1.75 A"/>
    <property type="chains" value="A/B/C=117-326"/>
</dbReference>
<dbReference type="PDBsum" id="2BSF"/>
<dbReference type="PDBsum" id="2BT7"/>
<dbReference type="PDBsum" id="2BT8"/>
<dbReference type="PDBsum" id="2JJL"/>
<dbReference type="PDBsum" id="2VRS"/>
<dbReference type="SMR" id="Q992I2"/>
<dbReference type="EvolutionaryTrace" id="Q992I2"/>
<dbReference type="GO" id="GO:0019028">
    <property type="term" value="C:viral capsid"/>
    <property type="evidence" value="ECO:0007669"/>
    <property type="project" value="UniProtKB-KW"/>
</dbReference>
<dbReference type="GO" id="GO:0046718">
    <property type="term" value="P:symbiont entry into host cell"/>
    <property type="evidence" value="ECO:0007669"/>
    <property type="project" value="UniProtKB-KW"/>
</dbReference>
<dbReference type="GO" id="GO:0019062">
    <property type="term" value="P:virion attachment to host cell"/>
    <property type="evidence" value="ECO:0007669"/>
    <property type="project" value="UniProtKB-KW"/>
</dbReference>
<dbReference type="CDD" id="cd07964">
    <property type="entry name" value="RBP-H"/>
    <property type="match status" value="1"/>
</dbReference>
<dbReference type="Gene3D" id="1.20.5.170">
    <property type="match status" value="1"/>
</dbReference>
<dbReference type="Gene3D" id="2.60.90.40">
    <property type="match status" value="1"/>
</dbReference>
<dbReference type="Gene3D" id="1.20.1480.30">
    <property type="entry name" value="Designed four-helix bundle protein"/>
    <property type="match status" value="1"/>
</dbReference>
<dbReference type="Gene3D" id="2.10.25.20">
    <property type="entry name" value="reovirus attachment protein sigma1, domain 1"/>
    <property type="match status" value="1"/>
</dbReference>
<dbReference type="InterPro" id="IPR041345">
    <property type="entry name" value="Reo_sigmaC_M"/>
</dbReference>
<dbReference type="InterPro" id="IPR007662">
    <property type="entry name" value="SigmaC_C"/>
</dbReference>
<dbReference type="Pfam" id="PF04582">
    <property type="entry name" value="Reo_sigmaC"/>
    <property type="match status" value="1"/>
</dbReference>
<dbReference type="Pfam" id="PF17750">
    <property type="entry name" value="Reo_sigmaC_M"/>
    <property type="match status" value="1"/>
</dbReference>
<dbReference type="SUPFAM" id="SSF58100">
    <property type="entry name" value="Bacterial hemolysins"/>
    <property type="match status" value="1"/>
</dbReference>
<keyword id="KW-0002">3D-structure</keyword>
<keyword id="KW-0053">Apoptosis</keyword>
<keyword id="KW-0167">Capsid protein</keyword>
<keyword id="KW-0175">Coiled coil</keyword>
<keyword id="KW-0945">Host-virus interaction</keyword>
<keyword id="KW-1161">Viral attachment to host cell</keyword>
<keyword id="KW-0946">Virion</keyword>
<keyword id="KW-1160">Virus entry into host cell</keyword>
<feature type="chain" id="PRO_0000222758" description="Sigma-C capsid protein">
    <location>
        <begin position="1"/>
        <end position="326"/>
    </location>
</feature>
<feature type="coiled-coil region" evidence="1">
    <location>
        <begin position="60"/>
        <end position="80"/>
    </location>
</feature>
<feature type="sequence conflict" description="In Ref. 1; AAC42113." evidence="3" ref="1">
    <original>T</original>
    <variation>S</variation>
    <location>
        <position position="57"/>
    </location>
</feature>
<feature type="sequence conflict" description="In Ref. 1; AAC42113." evidence="3" ref="1">
    <original>S</original>
    <variation>P</variation>
    <location>
        <position position="97"/>
    </location>
</feature>
<feature type="sequence conflict" description="In Ref. 1; AAC42113." evidence="3" ref="1">
    <original>F</original>
    <variation>L</variation>
    <location>
        <position position="162"/>
    </location>
</feature>
<feature type="sequence conflict" description="In Ref. 1; AAC42113." evidence="3" ref="1">
    <original>A</original>
    <variation>E</variation>
    <location>
        <position position="193"/>
    </location>
</feature>
<feature type="sequence conflict" description="In Ref. 1; AAC42113." evidence="3" ref="1">
    <original>A</original>
    <variation>E</variation>
    <location>
        <position position="204"/>
    </location>
</feature>
<feature type="sequence conflict" description="In Ref. 1; AAC42113." evidence="3" ref="1">
    <original>H</original>
    <variation>Y</variation>
    <location>
        <position position="221"/>
    </location>
</feature>
<feature type="helix" evidence="4">
    <location>
        <begin position="118"/>
        <end position="121"/>
    </location>
</feature>
<feature type="helix" evidence="4">
    <location>
        <begin position="123"/>
        <end position="153"/>
    </location>
</feature>
<feature type="turn" evidence="4">
    <location>
        <begin position="156"/>
        <end position="159"/>
    </location>
</feature>
<feature type="strand" evidence="4">
    <location>
        <begin position="166"/>
        <end position="169"/>
    </location>
</feature>
<feature type="strand" evidence="4">
    <location>
        <begin position="172"/>
        <end position="175"/>
    </location>
</feature>
<feature type="turn" evidence="4">
    <location>
        <begin position="179"/>
        <end position="181"/>
    </location>
</feature>
<feature type="strand" evidence="4">
    <location>
        <begin position="182"/>
        <end position="190"/>
    </location>
</feature>
<feature type="strand" evidence="4">
    <location>
        <begin position="196"/>
        <end position="209"/>
    </location>
</feature>
<feature type="strand" evidence="4">
    <location>
        <begin position="213"/>
        <end position="223"/>
    </location>
</feature>
<feature type="strand" evidence="4">
    <location>
        <begin position="226"/>
        <end position="239"/>
    </location>
</feature>
<feature type="strand" evidence="4">
    <location>
        <begin position="241"/>
        <end position="249"/>
    </location>
</feature>
<feature type="helix" evidence="4">
    <location>
        <begin position="250"/>
        <end position="252"/>
    </location>
</feature>
<feature type="strand" evidence="4">
    <location>
        <begin position="253"/>
        <end position="255"/>
    </location>
</feature>
<feature type="helix" evidence="4">
    <location>
        <begin position="260"/>
        <end position="263"/>
    </location>
</feature>
<feature type="helix" evidence="4">
    <location>
        <begin position="267"/>
        <end position="270"/>
    </location>
</feature>
<feature type="strand" evidence="4">
    <location>
        <begin position="274"/>
        <end position="282"/>
    </location>
</feature>
<feature type="strand" evidence="4">
    <location>
        <begin position="285"/>
        <end position="297"/>
    </location>
</feature>
<feature type="strand" evidence="4">
    <location>
        <begin position="300"/>
        <end position="306"/>
    </location>
</feature>
<feature type="strand" evidence="4">
    <location>
        <begin position="308"/>
        <end position="325"/>
    </location>
</feature>
<organismHost>
    <name type="scientific">Gallus gallus</name>
    <name type="common">Chicken</name>
    <dbReference type="NCBI Taxonomy" id="9031"/>
</organismHost>
<protein>
    <recommendedName>
        <fullName>Sigma-C capsid protein</fullName>
    </recommendedName>
    <alternativeName>
        <fullName>Sigma-3 protein</fullName>
    </alternativeName>
</protein>
<name>SIGC_ARVS1</name>
<gene>
    <name type="ORF">ORF3</name>
</gene>
<sequence length="326" mass="34856">MAGLNPSQRREVVSLILSLTSNVNISHGDLTPIYERLTNLEASTELLHRSISDISTTVSNISANLQDMTHTLDDVTANLDGLRTTVTALQDSVSILSTNVTDLTNRSSAHAAILSSLQTTVDGNSTAISNLKSDISSNGLAITDLQDRVKSLESTASHGLSFSPPLSVADGVVSLDMDPYFCSQRVSLTSYSAEAQLMQFRWMARGTNGSSDTIDMTVNAHCHGRRTDYMMSSTGNLTVTSNVVLLTFDLSDITHIPSDLARLVPSAGFQAASFPVDVSFTRDSATHAYQAYGVYSSSRVFTITFPTGGDGTANIRSLTVRTGIDT</sequence>
<proteinExistence type="evidence at protein level"/>
<comment type="function">
    <text evidence="2">Structural protein responsible for cell attachment. Induces cell apoptosis.</text>
</comment>
<comment type="subunit">
    <text>Homotrimer.</text>
</comment>
<comment type="subcellular location">
    <subcellularLocation>
        <location evidence="3">Virion</location>
    </subcellularLocation>
</comment>
<comment type="domain">
    <text>The C-terminus is important for the induction of cellular apoptosis.</text>
</comment>
<comment type="similarity">
    <text evidence="3">Belongs to the orthoreovirus sigma C protein family.</text>
</comment>